<name>SECA_PSEA8</name>
<protein>
    <recommendedName>
        <fullName evidence="1">Protein translocase subunit SecA</fullName>
        <ecNumber evidence="1">7.4.2.8</ecNumber>
    </recommendedName>
</protein>
<organism>
    <name type="scientific">Pseudomonas aeruginosa (strain LESB58)</name>
    <dbReference type="NCBI Taxonomy" id="557722"/>
    <lineage>
        <taxon>Bacteria</taxon>
        <taxon>Pseudomonadati</taxon>
        <taxon>Pseudomonadota</taxon>
        <taxon>Gammaproteobacteria</taxon>
        <taxon>Pseudomonadales</taxon>
        <taxon>Pseudomonadaceae</taxon>
        <taxon>Pseudomonas</taxon>
    </lineage>
</organism>
<feature type="chain" id="PRO_1000145046" description="Protein translocase subunit SecA">
    <location>
        <begin position="1"/>
        <end position="916"/>
    </location>
</feature>
<feature type="region of interest" description="Disordered" evidence="2">
    <location>
        <begin position="857"/>
        <end position="916"/>
    </location>
</feature>
<feature type="compositionally biased region" description="Basic residues" evidence="2">
    <location>
        <begin position="906"/>
        <end position="916"/>
    </location>
</feature>
<feature type="binding site" evidence="1">
    <location>
        <position position="87"/>
    </location>
    <ligand>
        <name>ATP</name>
        <dbReference type="ChEBI" id="CHEBI:30616"/>
    </ligand>
</feature>
<feature type="binding site" evidence="1">
    <location>
        <begin position="105"/>
        <end position="109"/>
    </location>
    <ligand>
        <name>ATP</name>
        <dbReference type="ChEBI" id="CHEBI:30616"/>
    </ligand>
</feature>
<feature type="binding site" evidence="1">
    <location>
        <position position="512"/>
    </location>
    <ligand>
        <name>ATP</name>
        <dbReference type="ChEBI" id="CHEBI:30616"/>
    </ligand>
</feature>
<feature type="binding site" evidence="1">
    <location>
        <position position="900"/>
    </location>
    <ligand>
        <name>Zn(2+)</name>
        <dbReference type="ChEBI" id="CHEBI:29105"/>
    </ligand>
</feature>
<feature type="binding site" evidence="1">
    <location>
        <position position="902"/>
    </location>
    <ligand>
        <name>Zn(2+)</name>
        <dbReference type="ChEBI" id="CHEBI:29105"/>
    </ligand>
</feature>
<feature type="binding site" evidence="1">
    <location>
        <position position="911"/>
    </location>
    <ligand>
        <name>Zn(2+)</name>
        <dbReference type="ChEBI" id="CHEBI:29105"/>
    </ligand>
</feature>
<feature type="binding site" evidence="1">
    <location>
        <position position="912"/>
    </location>
    <ligand>
        <name>Zn(2+)</name>
        <dbReference type="ChEBI" id="CHEBI:29105"/>
    </ligand>
</feature>
<evidence type="ECO:0000255" key="1">
    <source>
        <dbReference type="HAMAP-Rule" id="MF_01382"/>
    </source>
</evidence>
<evidence type="ECO:0000256" key="2">
    <source>
        <dbReference type="SAM" id="MobiDB-lite"/>
    </source>
</evidence>
<dbReference type="EC" id="7.4.2.8" evidence="1"/>
<dbReference type="EMBL" id="FM209186">
    <property type="protein sequence ID" value="CAW29536.1"/>
    <property type="molecule type" value="Genomic_DNA"/>
</dbReference>
<dbReference type="RefSeq" id="WP_003112752.1">
    <property type="nucleotide sequence ID" value="NC_011770.1"/>
</dbReference>
<dbReference type="SMR" id="B7UZI1"/>
<dbReference type="KEGG" id="pag:PLES_47821"/>
<dbReference type="HOGENOM" id="CLU_005314_3_0_6"/>
<dbReference type="GO" id="GO:0031522">
    <property type="term" value="C:cell envelope Sec protein transport complex"/>
    <property type="evidence" value="ECO:0007669"/>
    <property type="project" value="TreeGrafter"/>
</dbReference>
<dbReference type="GO" id="GO:0005829">
    <property type="term" value="C:cytosol"/>
    <property type="evidence" value="ECO:0007669"/>
    <property type="project" value="TreeGrafter"/>
</dbReference>
<dbReference type="GO" id="GO:0005886">
    <property type="term" value="C:plasma membrane"/>
    <property type="evidence" value="ECO:0007669"/>
    <property type="project" value="UniProtKB-SubCell"/>
</dbReference>
<dbReference type="GO" id="GO:0005524">
    <property type="term" value="F:ATP binding"/>
    <property type="evidence" value="ECO:0007669"/>
    <property type="project" value="UniProtKB-UniRule"/>
</dbReference>
<dbReference type="GO" id="GO:0046872">
    <property type="term" value="F:metal ion binding"/>
    <property type="evidence" value="ECO:0007669"/>
    <property type="project" value="UniProtKB-KW"/>
</dbReference>
<dbReference type="GO" id="GO:0008564">
    <property type="term" value="F:protein-exporting ATPase activity"/>
    <property type="evidence" value="ECO:0007669"/>
    <property type="project" value="UniProtKB-EC"/>
</dbReference>
<dbReference type="GO" id="GO:0065002">
    <property type="term" value="P:intracellular protein transmembrane transport"/>
    <property type="evidence" value="ECO:0007669"/>
    <property type="project" value="UniProtKB-UniRule"/>
</dbReference>
<dbReference type="GO" id="GO:0017038">
    <property type="term" value="P:protein import"/>
    <property type="evidence" value="ECO:0007669"/>
    <property type="project" value="InterPro"/>
</dbReference>
<dbReference type="GO" id="GO:0006605">
    <property type="term" value="P:protein targeting"/>
    <property type="evidence" value="ECO:0007669"/>
    <property type="project" value="UniProtKB-UniRule"/>
</dbReference>
<dbReference type="GO" id="GO:0043952">
    <property type="term" value="P:protein transport by the Sec complex"/>
    <property type="evidence" value="ECO:0007669"/>
    <property type="project" value="TreeGrafter"/>
</dbReference>
<dbReference type="CDD" id="cd17928">
    <property type="entry name" value="DEXDc_SecA"/>
    <property type="match status" value="1"/>
</dbReference>
<dbReference type="CDD" id="cd18803">
    <property type="entry name" value="SF2_C_secA"/>
    <property type="match status" value="1"/>
</dbReference>
<dbReference type="FunFam" id="1.10.3060.10:FF:000001">
    <property type="entry name" value="Preprotein translocase subunit SecA"/>
    <property type="match status" value="1"/>
</dbReference>
<dbReference type="FunFam" id="3.40.50.300:FF:000081">
    <property type="entry name" value="Preprotein translocase subunit SecA"/>
    <property type="match status" value="1"/>
</dbReference>
<dbReference type="FunFam" id="3.40.50.300:FF:000113">
    <property type="entry name" value="Preprotein translocase subunit SecA"/>
    <property type="match status" value="1"/>
</dbReference>
<dbReference type="FunFam" id="3.90.1440.10:FF:000001">
    <property type="entry name" value="Preprotein translocase subunit SecA"/>
    <property type="match status" value="1"/>
</dbReference>
<dbReference type="Gene3D" id="1.10.3060.10">
    <property type="entry name" value="Helical scaffold and wing domains of SecA"/>
    <property type="match status" value="1"/>
</dbReference>
<dbReference type="Gene3D" id="3.40.50.300">
    <property type="entry name" value="P-loop containing nucleotide triphosphate hydrolases"/>
    <property type="match status" value="2"/>
</dbReference>
<dbReference type="Gene3D" id="3.90.1440.10">
    <property type="entry name" value="SecA, preprotein cross-linking domain"/>
    <property type="match status" value="1"/>
</dbReference>
<dbReference type="HAMAP" id="MF_01382">
    <property type="entry name" value="SecA"/>
    <property type="match status" value="1"/>
</dbReference>
<dbReference type="InterPro" id="IPR014001">
    <property type="entry name" value="Helicase_ATP-bd"/>
</dbReference>
<dbReference type="InterPro" id="IPR001650">
    <property type="entry name" value="Helicase_C-like"/>
</dbReference>
<dbReference type="InterPro" id="IPR027417">
    <property type="entry name" value="P-loop_NTPase"/>
</dbReference>
<dbReference type="InterPro" id="IPR004027">
    <property type="entry name" value="SEC_C_motif"/>
</dbReference>
<dbReference type="InterPro" id="IPR000185">
    <property type="entry name" value="SecA"/>
</dbReference>
<dbReference type="InterPro" id="IPR020937">
    <property type="entry name" value="SecA_CS"/>
</dbReference>
<dbReference type="InterPro" id="IPR011115">
    <property type="entry name" value="SecA_DEAD"/>
</dbReference>
<dbReference type="InterPro" id="IPR014018">
    <property type="entry name" value="SecA_motor_DEAD"/>
</dbReference>
<dbReference type="InterPro" id="IPR011130">
    <property type="entry name" value="SecA_preprotein_X-link_dom"/>
</dbReference>
<dbReference type="InterPro" id="IPR044722">
    <property type="entry name" value="SecA_SF2_C"/>
</dbReference>
<dbReference type="InterPro" id="IPR011116">
    <property type="entry name" value="SecA_Wing/Scaffold"/>
</dbReference>
<dbReference type="InterPro" id="IPR036266">
    <property type="entry name" value="SecA_Wing/Scaffold_sf"/>
</dbReference>
<dbReference type="InterPro" id="IPR036670">
    <property type="entry name" value="SecA_X-link_sf"/>
</dbReference>
<dbReference type="NCBIfam" id="NF009538">
    <property type="entry name" value="PRK12904.1"/>
    <property type="match status" value="1"/>
</dbReference>
<dbReference type="NCBIfam" id="TIGR00963">
    <property type="entry name" value="secA"/>
    <property type="match status" value="1"/>
</dbReference>
<dbReference type="PANTHER" id="PTHR30612:SF0">
    <property type="entry name" value="CHLOROPLAST PROTEIN-TRANSPORTING ATPASE"/>
    <property type="match status" value="1"/>
</dbReference>
<dbReference type="PANTHER" id="PTHR30612">
    <property type="entry name" value="SECA INNER MEMBRANE COMPONENT OF SEC PROTEIN SECRETION SYSTEM"/>
    <property type="match status" value="1"/>
</dbReference>
<dbReference type="Pfam" id="PF21090">
    <property type="entry name" value="P-loop_SecA"/>
    <property type="match status" value="1"/>
</dbReference>
<dbReference type="Pfam" id="PF02810">
    <property type="entry name" value="SEC-C"/>
    <property type="match status" value="1"/>
</dbReference>
<dbReference type="Pfam" id="PF07517">
    <property type="entry name" value="SecA_DEAD"/>
    <property type="match status" value="1"/>
</dbReference>
<dbReference type="Pfam" id="PF01043">
    <property type="entry name" value="SecA_PP_bind"/>
    <property type="match status" value="1"/>
</dbReference>
<dbReference type="Pfam" id="PF07516">
    <property type="entry name" value="SecA_SW"/>
    <property type="match status" value="1"/>
</dbReference>
<dbReference type="PRINTS" id="PR00906">
    <property type="entry name" value="SECA"/>
</dbReference>
<dbReference type="SMART" id="SM00957">
    <property type="entry name" value="SecA_DEAD"/>
    <property type="match status" value="1"/>
</dbReference>
<dbReference type="SMART" id="SM00958">
    <property type="entry name" value="SecA_PP_bind"/>
    <property type="match status" value="1"/>
</dbReference>
<dbReference type="SUPFAM" id="SSF81886">
    <property type="entry name" value="Helical scaffold and wing domains of SecA"/>
    <property type="match status" value="1"/>
</dbReference>
<dbReference type="SUPFAM" id="SSF52540">
    <property type="entry name" value="P-loop containing nucleoside triphosphate hydrolases"/>
    <property type="match status" value="2"/>
</dbReference>
<dbReference type="SUPFAM" id="SSF81767">
    <property type="entry name" value="Pre-protein crosslinking domain of SecA"/>
    <property type="match status" value="1"/>
</dbReference>
<dbReference type="PROSITE" id="PS01312">
    <property type="entry name" value="SECA"/>
    <property type="match status" value="1"/>
</dbReference>
<dbReference type="PROSITE" id="PS51196">
    <property type="entry name" value="SECA_MOTOR_DEAD"/>
    <property type="match status" value="1"/>
</dbReference>
<accession>B7UZI1</accession>
<gene>
    <name evidence="1" type="primary">secA</name>
    <name type="ordered locus">PLES_47821</name>
</gene>
<reference key="1">
    <citation type="journal article" date="2009" name="Genome Res.">
        <title>Newly introduced genomic prophage islands are critical determinants of in vivo competitiveness in the Liverpool epidemic strain of Pseudomonas aeruginosa.</title>
        <authorList>
            <person name="Winstanley C."/>
            <person name="Langille M.G.I."/>
            <person name="Fothergill J.L."/>
            <person name="Kukavica-Ibrulj I."/>
            <person name="Paradis-Bleau C."/>
            <person name="Sanschagrin F."/>
            <person name="Thomson N.R."/>
            <person name="Winsor G.L."/>
            <person name="Quail M.A."/>
            <person name="Lennard N."/>
            <person name="Bignell A."/>
            <person name="Clarke L."/>
            <person name="Seeger K."/>
            <person name="Saunders D."/>
            <person name="Harris D."/>
            <person name="Parkhill J."/>
            <person name="Hancock R.E.W."/>
            <person name="Brinkman F.S.L."/>
            <person name="Levesque R.C."/>
        </authorList>
    </citation>
    <scope>NUCLEOTIDE SEQUENCE [LARGE SCALE GENOMIC DNA]</scope>
    <source>
        <strain>LESB58</strain>
    </source>
</reference>
<comment type="function">
    <text evidence="1">Part of the Sec protein translocase complex. Interacts with the SecYEG preprotein conducting channel. Has a central role in coupling the hydrolysis of ATP to the transfer of proteins into and across the cell membrane, serving both as a receptor for the preprotein-SecB complex and as an ATP-driven molecular motor driving the stepwise translocation of polypeptide chains across the membrane.</text>
</comment>
<comment type="catalytic activity">
    <reaction evidence="1">
        <text>ATP + H2O + cellular proteinSide 1 = ADP + phosphate + cellular proteinSide 2.</text>
        <dbReference type="EC" id="7.4.2.8"/>
    </reaction>
</comment>
<comment type="cofactor">
    <cofactor evidence="1">
        <name>Zn(2+)</name>
        <dbReference type="ChEBI" id="CHEBI:29105"/>
    </cofactor>
    <text evidence="1">May bind 1 zinc ion per subunit.</text>
</comment>
<comment type="subunit">
    <text evidence="1">Monomer and homodimer. Part of the essential Sec protein translocation apparatus which comprises SecA, SecYEG and auxiliary proteins SecDF-YajC and YidC.</text>
</comment>
<comment type="subcellular location">
    <subcellularLocation>
        <location evidence="1">Cell inner membrane</location>
        <topology evidence="1">Peripheral membrane protein</topology>
        <orientation evidence="1">Cytoplasmic side</orientation>
    </subcellularLocation>
    <subcellularLocation>
        <location evidence="1">Cytoplasm</location>
    </subcellularLocation>
    <text evidence="1">Distribution is 50-50.</text>
</comment>
<comment type="similarity">
    <text evidence="1">Belongs to the SecA family.</text>
</comment>
<sequence length="916" mass="103855">MFAPLLKKLFGSKNERDVKRMAKAVQAINALEPQMVALSDEQLKAKTAEFQQRYAKGETLDQLLPEAFAVVREAGKRVMGMRHFDVQLIGGMTLHDGKIAEMRTGEGKTLVGTLPVYLNALSGKGVHVVTVNDYLARRDANWMRPLYEFLGLSVGVVTPFQPPEDKRAAYAADITYGTNNEFGFDYLRDNMAFSLDDKFQRELNFAVVDEVDSILIDEARTPLIISGQAEDSSELYIKINKLIPRLKRQVEEVEGKPTEEGHYSIDEKTRQVELNEQGHQFIEDLLSQNGLLGEGESLYSAHNLSLLTHVYAALRAHTLFHRNVEYIVQGDQILLIDEHTGRTMPGRRLSEGLHQAIEAKEGLPIQAESQTLASTTFQNYFRLYNKLAGMTGTADTEAFEFRQIYGLDVVVIPTHRPIARKDFNDLVYLTQEEKYAAIITDIKQCQALGRPILVGTASIESSEYVSKLLQEAGIEHKVLNAKYHEKEAEIIAQAGAPGSVTIATNMAGRGTDILLGGNWEVEVAALENPTEEQIAQIKAEWQKRHQQVIEAGGLHVIASERHESRRIDNQLRGRAGRQGDPGSSRFYLSLEDNLMRIFASDRVKNFMKALGMQSGEAIEHRMVTNAIEKAQRKVEGRNFDIRKQLLEFDDVANEQRKVIYHMRNTLLSAEDVGETIKEFREETLSATINQHIPPQSLPEQWDIEGLEAALYSDFAVRLPIQQWLDEDDKLYEETLRSKILEQIVAAYYEKEELAGAEALRAFEKQMLLRVLDDLWKDHLSTMDHLRHGIHLRGYAQKNPKQEYKRESFTLFQELLDSIKRDTIRVLSHVQVRREDPAEEEARLRREAEELAKRMQFQHAEAPSMEQAVAGEEEELPEGPAPVVPLEPVRNEQKIGRNEPCPCGSGKKYKHCHGQLD</sequence>
<keyword id="KW-0067">ATP-binding</keyword>
<keyword id="KW-0997">Cell inner membrane</keyword>
<keyword id="KW-1003">Cell membrane</keyword>
<keyword id="KW-0963">Cytoplasm</keyword>
<keyword id="KW-0472">Membrane</keyword>
<keyword id="KW-0479">Metal-binding</keyword>
<keyword id="KW-0547">Nucleotide-binding</keyword>
<keyword id="KW-0653">Protein transport</keyword>
<keyword id="KW-1278">Translocase</keyword>
<keyword id="KW-0811">Translocation</keyword>
<keyword id="KW-0813">Transport</keyword>
<keyword id="KW-0862">Zinc</keyword>
<proteinExistence type="inferred from homology"/>